<organism>
    <name type="scientific">Geobacillus sp. (strain WCH70)</name>
    <dbReference type="NCBI Taxonomy" id="471223"/>
    <lineage>
        <taxon>Bacteria</taxon>
        <taxon>Bacillati</taxon>
        <taxon>Bacillota</taxon>
        <taxon>Bacilli</taxon>
        <taxon>Bacillales</taxon>
        <taxon>Anoxybacillaceae</taxon>
        <taxon>Geobacillus</taxon>
    </lineage>
</organism>
<keyword id="KW-0175">Coiled coil</keyword>
<keyword id="KW-0436">Ligase</keyword>
<reference key="1">
    <citation type="submission" date="2009-06" db="EMBL/GenBank/DDBJ databases">
        <title>Complete sequence of chromosome of Geopacillus sp. WCH70.</title>
        <authorList>
            <consortium name="US DOE Joint Genome Institute"/>
            <person name="Lucas S."/>
            <person name="Copeland A."/>
            <person name="Lapidus A."/>
            <person name="Glavina del Rio T."/>
            <person name="Dalin E."/>
            <person name="Tice H."/>
            <person name="Bruce D."/>
            <person name="Goodwin L."/>
            <person name="Pitluck S."/>
            <person name="Chertkov O."/>
            <person name="Brettin T."/>
            <person name="Detter J.C."/>
            <person name="Han C."/>
            <person name="Larimer F."/>
            <person name="Land M."/>
            <person name="Hauser L."/>
            <person name="Kyrpides N."/>
            <person name="Mikhailova N."/>
            <person name="Brumm P."/>
            <person name="Mead D.A."/>
            <person name="Richardson P."/>
        </authorList>
    </citation>
    <scope>NUCLEOTIDE SEQUENCE [LARGE SCALE GENOMIC DNA]</scope>
    <source>
        <strain>WCH70</strain>
    </source>
</reference>
<comment type="function">
    <text evidence="1">Involved in bacillithiol (BSH) biosynthesis. May catalyze the last step of the pathway, the addition of cysteine to glucosamine malate (GlcN-Mal) to generate BSH.</text>
</comment>
<comment type="similarity">
    <text evidence="1">Belongs to the BshC family.</text>
</comment>
<proteinExistence type="inferred from homology"/>
<evidence type="ECO:0000255" key="1">
    <source>
        <dbReference type="HAMAP-Rule" id="MF_01867"/>
    </source>
</evidence>
<feature type="chain" id="PRO_1000216164" description="Putative cysteine ligase BshC">
    <location>
        <begin position="1"/>
        <end position="542"/>
    </location>
</feature>
<feature type="coiled-coil region" evidence="1">
    <location>
        <begin position="458"/>
        <end position="479"/>
    </location>
</feature>
<accession>C5D8L4</accession>
<name>BSHC_GEOSW</name>
<gene>
    <name evidence="1" type="primary">bshC</name>
    <name type="ordered locus">GWCH70_1011</name>
</gene>
<protein>
    <recommendedName>
        <fullName evidence="1">Putative cysteine ligase BshC</fullName>
        <ecNumber evidence="1">6.-.-.-</ecNumber>
    </recommendedName>
</protein>
<sequence length="542" mass="62909">MEVREISLAATTPLATDYINGTFPIEKGFSYSLQAEDVFWRRLDDIKGRAYPRRELVEYLRSYHQRFHASSETFYNIEKLLHPESVVVVGGQQAGLLTGPLYTIYKIISVIKLAKEQERKLGVPVVPLFWIAGEDHDIAEVNHVYIAEDGKIKKYVYPDIPQEKRMVSDVPLDHQVCSTWITNIVKTYGETETTNKLLDFLFQCLDQSKTFVDFFASIVLRLFASEGLVVLNAADVPLRAIESSFFTALIECHREVTDAVLRKQHQLRQLGYKNTLDIQPHCANLFYYDGRQRWLLEHDPQKEVFHSKKGEFVFSKDELIQLAKTKPGHLSNNVVTRPLMQEFLLPTLAFVAGPGEIAYWAELKEAFSIFGFKMPPVIPRVNITIVERSIQTDLAEIGIDIMDVFKGRLEEAKQQWLAQQTRYPLEEMFAKAKAEIEEIHRPLREFGMEIDRGLAGLLTKNATLLQAQIDFLHQTLQRALIRKYEVELRKFSRVEMSLMPNQAPQERIWNIFYYINKYGFDFLEKLLQLDYKWNGMHKIVYI</sequence>
<dbReference type="EC" id="6.-.-.-" evidence="1"/>
<dbReference type="EMBL" id="CP001638">
    <property type="protein sequence ID" value="ACS23871.1"/>
    <property type="molecule type" value="Genomic_DNA"/>
</dbReference>
<dbReference type="SMR" id="C5D8L4"/>
<dbReference type="STRING" id="471223.GWCH70_1011"/>
<dbReference type="KEGG" id="gwc:GWCH70_1011"/>
<dbReference type="eggNOG" id="COG4365">
    <property type="taxonomic scope" value="Bacteria"/>
</dbReference>
<dbReference type="HOGENOM" id="CLU_022249_1_0_9"/>
<dbReference type="OrthoDB" id="9765151at2"/>
<dbReference type="GO" id="GO:0016874">
    <property type="term" value="F:ligase activity"/>
    <property type="evidence" value="ECO:0007669"/>
    <property type="project" value="UniProtKB-UniRule"/>
</dbReference>
<dbReference type="HAMAP" id="MF_01867">
    <property type="entry name" value="BshC"/>
    <property type="match status" value="1"/>
</dbReference>
<dbReference type="InterPro" id="IPR011199">
    <property type="entry name" value="Bacillithiol_biosynth_BshC"/>
</dbReference>
<dbReference type="InterPro" id="IPR055399">
    <property type="entry name" value="CC_BshC"/>
</dbReference>
<dbReference type="InterPro" id="IPR055398">
    <property type="entry name" value="Rossmann-like_BshC"/>
</dbReference>
<dbReference type="NCBIfam" id="TIGR03998">
    <property type="entry name" value="thiol_BshC"/>
    <property type="match status" value="1"/>
</dbReference>
<dbReference type="Pfam" id="PF24850">
    <property type="entry name" value="CC_BshC"/>
    <property type="match status" value="1"/>
</dbReference>
<dbReference type="Pfam" id="PF10079">
    <property type="entry name" value="Rossmann-like_BshC"/>
    <property type="match status" value="1"/>
</dbReference>
<dbReference type="PIRSF" id="PIRSF012535">
    <property type="entry name" value="UCP012535"/>
    <property type="match status" value="1"/>
</dbReference>